<feature type="chain" id="PRO_0000242010" description="Arginine--tRNA ligase">
    <location>
        <begin position="1"/>
        <end position="556"/>
    </location>
</feature>
<feature type="short sequence motif" description="'HIGH' region">
    <location>
        <begin position="130"/>
        <end position="140"/>
    </location>
</feature>
<reference key="1">
    <citation type="journal article" date="2005" name="J. Bacteriol.">
        <title>Complete genome sequence and analysis of the multiresistant nosocomial pathogen Corynebacterium jeikeium K411, a lipid-requiring bacterium of the human skin flora.</title>
        <authorList>
            <person name="Tauch A."/>
            <person name="Kaiser O."/>
            <person name="Hain T."/>
            <person name="Goesmann A."/>
            <person name="Weisshaar B."/>
            <person name="Albersmeier A."/>
            <person name="Bekel T."/>
            <person name="Bischoff N."/>
            <person name="Brune I."/>
            <person name="Chakraborty T."/>
            <person name="Kalinowski J."/>
            <person name="Meyer F."/>
            <person name="Rupp O."/>
            <person name="Schneiker S."/>
            <person name="Viehoever P."/>
            <person name="Puehler A."/>
        </authorList>
    </citation>
    <scope>NUCLEOTIDE SEQUENCE [LARGE SCALE GENOMIC DNA]</scope>
    <source>
        <strain>K411</strain>
    </source>
</reference>
<organism>
    <name type="scientific">Corynebacterium jeikeium (strain K411)</name>
    <dbReference type="NCBI Taxonomy" id="306537"/>
    <lineage>
        <taxon>Bacteria</taxon>
        <taxon>Bacillati</taxon>
        <taxon>Actinomycetota</taxon>
        <taxon>Actinomycetes</taxon>
        <taxon>Mycobacteriales</taxon>
        <taxon>Corynebacteriaceae</taxon>
        <taxon>Corynebacterium</taxon>
    </lineage>
</organism>
<proteinExistence type="inferred from homology"/>
<keyword id="KW-0030">Aminoacyl-tRNA synthetase</keyword>
<keyword id="KW-0067">ATP-binding</keyword>
<keyword id="KW-0963">Cytoplasm</keyword>
<keyword id="KW-0436">Ligase</keyword>
<keyword id="KW-0547">Nucleotide-binding</keyword>
<keyword id="KW-0648">Protein biosynthesis</keyword>
<keyword id="KW-1185">Reference proteome</keyword>
<sequence length="556" mass="60134">MTPAELSELITETARTTLDAHGLDSSVVPESATVERPRNPEHGDYATNIAMQVAKKAGTNPREFGTWLAESLGAHEGIDEATVAGPGFINIRLAAAAQGKIVEDILTVGANFGHGDELAGAAINLEFVSANPTGPIHLGGTRWAAVGDSLGRVLNARGAKVTREYYFNDHGAQIDRFARSLVAAAKGEPTPEDGYGGDYIQDIASQIVEANPDWQKLGADEAQELFRSQGVELMFAHIKRTLAEFGTEFDVYFHENSLFESGAVEAAIQKIKDNGNLYEADGAWWLRSTNFGDDKDRVVIKSDGNAAYIAGDIAYVADKFDRGHNLCIYMLGADHHGYIARLRAAAAAMGYDPQQVEVLIGQLVNLVKDGKAVRMSKRAGTVITLDDLVEAIGVDAARYAMIRSSVDSSLDIDMDLWASKSNDNPVFYVQYAHARLCSLARKAEDLGVTREGADLSLLTHDREGDLIRTLGEFPAVVKTAAELREPHRVARYAESLAGTFHRFYDACQILPKPSDDEQTVAENKALFAARLSLAAASRQTLANALELLGVAAPERM</sequence>
<dbReference type="EC" id="6.1.1.19" evidence="1"/>
<dbReference type="EMBL" id="CR931997">
    <property type="protein sequence ID" value="CAI37526.1"/>
    <property type="status" value="ALT_INIT"/>
    <property type="molecule type" value="Genomic_DNA"/>
</dbReference>
<dbReference type="RefSeq" id="WP_041626385.1">
    <property type="nucleotide sequence ID" value="NC_007164.1"/>
</dbReference>
<dbReference type="SMR" id="Q4JUI1"/>
<dbReference type="STRING" id="306537.jk1354"/>
<dbReference type="KEGG" id="cjk:jk1354"/>
<dbReference type="PATRIC" id="fig|306537.10.peg.1374"/>
<dbReference type="eggNOG" id="COG0018">
    <property type="taxonomic scope" value="Bacteria"/>
</dbReference>
<dbReference type="HOGENOM" id="CLU_006406_0_1_11"/>
<dbReference type="OrthoDB" id="9803211at2"/>
<dbReference type="Proteomes" id="UP000000545">
    <property type="component" value="Chromosome"/>
</dbReference>
<dbReference type="GO" id="GO:0005737">
    <property type="term" value="C:cytoplasm"/>
    <property type="evidence" value="ECO:0007669"/>
    <property type="project" value="UniProtKB-SubCell"/>
</dbReference>
<dbReference type="GO" id="GO:0004814">
    <property type="term" value="F:arginine-tRNA ligase activity"/>
    <property type="evidence" value="ECO:0007669"/>
    <property type="project" value="UniProtKB-UniRule"/>
</dbReference>
<dbReference type="GO" id="GO:0005524">
    <property type="term" value="F:ATP binding"/>
    <property type="evidence" value="ECO:0007669"/>
    <property type="project" value="UniProtKB-UniRule"/>
</dbReference>
<dbReference type="GO" id="GO:0006420">
    <property type="term" value="P:arginyl-tRNA aminoacylation"/>
    <property type="evidence" value="ECO:0007669"/>
    <property type="project" value="UniProtKB-UniRule"/>
</dbReference>
<dbReference type="CDD" id="cd00671">
    <property type="entry name" value="ArgRS_core"/>
    <property type="match status" value="1"/>
</dbReference>
<dbReference type="FunFam" id="1.10.730.10:FF:000008">
    <property type="entry name" value="Arginine--tRNA ligase"/>
    <property type="match status" value="1"/>
</dbReference>
<dbReference type="FunFam" id="3.40.50.620:FF:000062">
    <property type="entry name" value="Arginine--tRNA ligase"/>
    <property type="match status" value="1"/>
</dbReference>
<dbReference type="Gene3D" id="3.30.1360.70">
    <property type="entry name" value="Arginyl tRNA synthetase N-terminal domain"/>
    <property type="match status" value="1"/>
</dbReference>
<dbReference type="Gene3D" id="3.40.50.620">
    <property type="entry name" value="HUPs"/>
    <property type="match status" value="1"/>
</dbReference>
<dbReference type="Gene3D" id="1.10.730.10">
    <property type="entry name" value="Isoleucyl-tRNA Synthetase, Domain 1"/>
    <property type="match status" value="1"/>
</dbReference>
<dbReference type="HAMAP" id="MF_00123">
    <property type="entry name" value="Arg_tRNA_synth"/>
    <property type="match status" value="1"/>
</dbReference>
<dbReference type="InterPro" id="IPR001412">
    <property type="entry name" value="aa-tRNA-synth_I_CS"/>
</dbReference>
<dbReference type="InterPro" id="IPR001278">
    <property type="entry name" value="Arg-tRNA-ligase"/>
</dbReference>
<dbReference type="InterPro" id="IPR005148">
    <property type="entry name" value="Arg-tRNA-synth_N"/>
</dbReference>
<dbReference type="InterPro" id="IPR036695">
    <property type="entry name" value="Arg-tRNA-synth_N_sf"/>
</dbReference>
<dbReference type="InterPro" id="IPR035684">
    <property type="entry name" value="ArgRS_core"/>
</dbReference>
<dbReference type="InterPro" id="IPR008909">
    <property type="entry name" value="DALR_anticod-bd"/>
</dbReference>
<dbReference type="InterPro" id="IPR014729">
    <property type="entry name" value="Rossmann-like_a/b/a_fold"/>
</dbReference>
<dbReference type="InterPro" id="IPR009080">
    <property type="entry name" value="tRNAsynth_Ia_anticodon-bd"/>
</dbReference>
<dbReference type="NCBIfam" id="TIGR00456">
    <property type="entry name" value="argS"/>
    <property type="match status" value="1"/>
</dbReference>
<dbReference type="PANTHER" id="PTHR11956:SF5">
    <property type="entry name" value="ARGININE--TRNA LIGASE, CYTOPLASMIC"/>
    <property type="match status" value="1"/>
</dbReference>
<dbReference type="PANTHER" id="PTHR11956">
    <property type="entry name" value="ARGINYL-TRNA SYNTHETASE"/>
    <property type="match status" value="1"/>
</dbReference>
<dbReference type="Pfam" id="PF03485">
    <property type="entry name" value="Arg_tRNA_synt_N"/>
    <property type="match status" value="1"/>
</dbReference>
<dbReference type="Pfam" id="PF05746">
    <property type="entry name" value="DALR_1"/>
    <property type="match status" value="1"/>
</dbReference>
<dbReference type="Pfam" id="PF00750">
    <property type="entry name" value="tRNA-synt_1d"/>
    <property type="match status" value="1"/>
</dbReference>
<dbReference type="PRINTS" id="PR01038">
    <property type="entry name" value="TRNASYNTHARG"/>
</dbReference>
<dbReference type="SMART" id="SM01016">
    <property type="entry name" value="Arg_tRNA_synt_N"/>
    <property type="match status" value="1"/>
</dbReference>
<dbReference type="SMART" id="SM00836">
    <property type="entry name" value="DALR_1"/>
    <property type="match status" value="1"/>
</dbReference>
<dbReference type="SUPFAM" id="SSF47323">
    <property type="entry name" value="Anticodon-binding domain of a subclass of class I aminoacyl-tRNA synthetases"/>
    <property type="match status" value="1"/>
</dbReference>
<dbReference type="SUPFAM" id="SSF55190">
    <property type="entry name" value="Arginyl-tRNA synthetase (ArgRS), N-terminal 'additional' domain"/>
    <property type="match status" value="1"/>
</dbReference>
<dbReference type="SUPFAM" id="SSF52374">
    <property type="entry name" value="Nucleotidylyl transferase"/>
    <property type="match status" value="1"/>
</dbReference>
<dbReference type="PROSITE" id="PS00178">
    <property type="entry name" value="AA_TRNA_LIGASE_I"/>
    <property type="match status" value="1"/>
</dbReference>
<comment type="catalytic activity">
    <reaction evidence="1">
        <text>tRNA(Arg) + L-arginine + ATP = L-arginyl-tRNA(Arg) + AMP + diphosphate</text>
        <dbReference type="Rhea" id="RHEA:20301"/>
        <dbReference type="Rhea" id="RHEA-COMP:9658"/>
        <dbReference type="Rhea" id="RHEA-COMP:9673"/>
        <dbReference type="ChEBI" id="CHEBI:30616"/>
        <dbReference type="ChEBI" id="CHEBI:32682"/>
        <dbReference type="ChEBI" id="CHEBI:33019"/>
        <dbReference type="ChEBI" id="CHEBI:78442"/>
        <dbReference type="ChEBI" id="CHEBI:78513"/>
        <dbReference type="ChEBI" id="CHEBI:456215"/>
        <dbReference type="EC" id="6.1.1.19"/>
    </reaction>
</comment>
<comment type="subunit">
    <text evidence="1">Monomer.</text>
</comment>
<comment type="subcellular location">
    <subcellularLocation>
        <location evidence="1">Cytoplasm</location>
    </subcellularLocation>
</comment>
<comment type="similarity">
    <text evidence="1">Belongs to the class-I aminoacyl-tRNA synthetase family.</text>
</comment>
<comment type="sequence caution" evidence="2">
    <conflict type="erroneous initiation">
        <sequence resource="EMBL-CDS" id="CAI37526"/>
    </conflict>
</comment>
<name>SYR_CORJK</name>
<evidence type="ECO:0000255" key="1">
    <source>
        <dbReference type="HAMAP-Rule" id="MF_00123"/>
    </source>
</evidence>
<evidence type="ECO:0000305" key="2"/>
<gene>
    <name evidence="1" type="primary">argS</name>
    <name type="ordered locus">jk1354</name>
</gene>
<accession>Q4JUI1</accession>
<protein>
    <recommendedName>
        <fullName evidence="1">Arginine--tRNA ligase</fullName>
        <ecNumber evidence="1">6.1.1.19</ecNumber>
    </recommendedName>
    <alternativeName>
        <fullName evidence="1">Arginyl-tRNA synthetase</fullName>
        <shortName evidence="1">ArgRS</shortName>
    </alternativeName>
</protein>